<keyword id="KW-0002">3D-structure</keyword>
<keyword id="KW-0145">Chemotaxis</keyword>
<keyword id="KW-0202">Cytokine</keyword>
<keyword id="KW-0903">Direct protein sequencing</keyword>
<keyword id="KW-1015">Disulfide bond</keyword>
<keyword id="KW-0395">Inflammatory response</keyword>
<keyword id="KW-1185">Reference proteome</keyword>
<keyword id="KW-0964">Secreted</keyword>
<keyword id="KW-0732">Signal</keyword>
<sequence length="94" mass="10648">MMGLSLASAVLLASLLSLHLGTATRGSDISKTCCFQYSHKPLPWTWVRSYEFTSNSCSQRAVIFTTKRGKKVCTHPRKKWVQKYISLLKTPKQL</sequence>
<feature type="signal peptide" evidence="3">
    <location>
        <begin position="1"/>
        <end position="23"/>
    </location>
</feature>
<feature type="chain" id="PRO_0000005238" description="C-C motif chemokine 26">
    <location>
        <begin position="24"/>
        <end position="94"/>
    </location>
</feature>
<feature type="disulfide bond" evidence="4">
    <location>
        <begin position="33"/>
        <end position="57"/>
    </location>
</feature>
<feature type="disulfide bond" evidence="4">
    <location>
        <begin position="34"/>
        <end position="73"/>
    </location>
</feature>
<feature type="sequence variant" id="VAR_029192" description="In dbSNP:rs11465333.">
    <original>L</original>
    <variation>R</variation>
    <location>
        <position position="18"/>
    </location>
</feature>
<feature type="helix" evidence="13">
    <location>
        <begin position="44"/>
        <end position="46"/>
    </location>
</feature>
<feature type="strand" evidence="13">
    <location>
        <begin position="47"/>
        <end position="52"/>
    </location>
</feature>
<feature type="strand" evidence="13">
    <location>
        <begin position="55"/>
        <end position="59"/>
    </location>
</feature>
<feature type="strand" evidence="13">
    <location>
        <begin position="62"/>
        <end position="66"/>
    </location>
</feature>
<feature type="strand" evidence="13">
    <location>
        <begin position="71"/>
        <end position="74"/>
    </location>
</feature>
<feature type="strand" evidence="13">
    <location>
        <begin position="76"/>
        <end position="78"/>
    </location>
</feature>
<feature type="helix" evidence="13">
    <location>
        <begin position="79"/>
        <end position="88"/>
    </location>
</feature>
<organism>
    <name type="scientific">Homo sapiens</name>
    <name type="common">Human</name>
    <dbReference type="NCBI Taxonomy" id="9606"/>
    <lineage>
        <taxon>Eukaryota</taxon>
        <taxon>Metazoa</taxon>
        <taxon>Chordata</taxon>
        <taxon>Craniata</taxon>
        <taxon>Vertebrata</taxon>
        <taxon>Euteleostomi</taxon>
        <taxon>Mammalia</taxon>
        <taxon>Eutheria</taxon>
        <taxon>Euarchontoglires</taxon>
        <taxon>Primates</taxon>
        <taxon>Haplorrhini</taxon>
        <taxon>Catarrhini</taxon>
        <taxon>Hominidae</taxon>
        <taxon>Homo</taxon>
    </lineage>
</organism>
<dbReference type="EMBL" id="AF124601">
    <property type="protein sequence ID" value="AAD22197.1"/>
    <property type="molecule type" value="mRNA"/>
</dbReference>
<dbReference type="EMBL" id="AB016542">
    <property type="protein sequence ID" value="BAA36704.1"/>
    <property type="molecule type" value="mRNA"/>
</dbReference>
<dbReference type="EMBL" id="AB010447">
    <property type="protein sequence ID" value="BAA84579.1"/>
    <property type="molecule type" value="mRNA"/>
</dbReference>
<dbReference type="EMBL" id="AF096296">
    <property type="protein sequence ID" value="AAF09265.1"/>
    <property type="molecule type" value="mRNA"/>
</dbReference>
<dbReference type="EMBL" id="AF142434">
    <property type="protein sequence ID" value="AAD46495.1"/>
    <property type="molecule type" value="mRNA"/>
</dbReference>
<dbReference type="EMBL" id="EF064763">
    <property type="protein sequence ID" value="ABK41946.1"/>
    <property type="molecule type" value="Genomic_DNA"/>
</dbReference>
<dbReference type="EMBL" id="AY358893">
    <property type="protein sequence ID" value="AAQ89252.1"/>
    <property type="molecule type" value="mRNA"/>
</dbReference>
<dbReference type="EMBL" id="AC005102">
    <property type="protein sequence ID" value="AAD15411.1"/>
    <property type="molecule type" value="Genomic_DNA"/>
</dbReference>
<dbReference type="EMBL" id="CH471220">
    <property type="protein sequence ID" value="EAW71771.1"/>
    <property type="molecule type" value="Genomic_DNA"/>
</dbReference>
<dbReference type="EMBL" id="BC069394">
    <property type="protein sequence ID" value="AAH69394.1"/>
    <property type="molecule type" value="mRNA"/>
</dbReference>
<dbReference type="EMBL" id="BC093773">
    <property type="protein sequence ID" value="AAH93773.1"/>
    <property type="molecule type" value="mRNA"/>
</dbReference>
<dbReference type="EMBL" id="BC101665">
    <property type="protein sequence ID" value="AAI01666.1"/>
    <property type="molecule type" value="mRNA"/>
</dbReference>
<dbReference type="CCDS" id="CCDS5578.1"/>
<dbReference type="RefSeq" id="NP_001358865.1">
    <property type="nucleotide sequence ID" value="NM_001371936.1"/>
</dbReference>
<dbReference type="RefSeq" id="NP_001358867.1">
    <property type="nucleotide sequence ID" value="NM_001371938.1"/>
</dbReference>
<dbReference type="RefSeq" id="NP_006063.1">
    <property type="nucleotide sequence ID" value="NM_006072.4"/>
</dbReference>
<dbReference type="RefSeq" id="XP_016867161.1">
    <property type="nucleotide sequence ID" value="XM_017011672.1"/>
</dbReference>
<dbReference type="PDB" id="1G2S">
    <property type="method" value="NMR"/>
    <property type="chains" value="A=24-94"/>
</dbReference>
<dbReference type="PDB" id="1G2T">
    <property type="method" value="NMR"/>
    <property type="chains" value="A=24-94"/>
</dbReference>
<dbReference type="PDBsum" id="1G2S"/>
<dbReference type="PDBsum" id="1G2T"/>
<dbReference type="SMR" id="Q9Y258"/>
<dbReference type="BioGRID" id="115626">
    <property type="interactions" value="48"/>
</dbReference>
<dbReference type="DIP" id="DIP-5877N"/>
<dbReference type="FunCoup" id="Q9Y258">
    <property type="interactions" value="664"/>
</dbReference>
<dbReference type="IntAct" id="Q9Y258">
    <property type="interactions" value="34"/>
</dbReference>
<dbReference type="MINT" id="Q9Y258"/>
<dbReference type="STRING" id="9606.ENSP00000378365"/>
<dbReference type="iPTMnet" id="Q9Y258"/>
<dbReference type="PhosphoSitePlus" id="Q9Y258"/>
<dbReference type="BioMuta" id="CCL26"/>
<dbReference type="DMDM" id="6685990"/>
<dbReference type="MassIVE" id="Q9Y258"/>
<dbReference type="PaxDb" id="9606-ENSP00000378365"/>
<dbReference type="PeptideAtlas" id="Q9Y258"/>
<dbReference type="Antibodypedia" id="29148">
    <property type="antibodies" value="332 antibodies from 26 providers"/>
</dbReference>
<dbReference type="DNASU" id="10344"/>
<dbReference type="Ensembl" id="ENST00000005180.9">
    <property type="protein sequence ID" value="ENSP00000005180.4"/>
    <property type="gene ID" value="ENSG00000006606.9"/>
</dbReference>
<dbReference type="Ensembl" id="ENST00000394905.2">
    <property type="protein sequence ID" value="ENSP00000378365.2"/>
    <property type="gene ID" value="ENSG00000006606.9"/>
</dbReference>
<dbReference type="GeneID" id="10344"/>
<dbReference type="KEGG" id="hsa:10344"/>
<dbReference type="MANE-Select" id="ENST00000005180.9">
    <property type="protein sequence ID" value="ENSP00000005180.4"/>
    <property type="RefSeq nucleotide sequence ID" value="NM_001371938.1"/>
    <property type="RefSeq protein sequence ID" value="NP_001358867.1"/>
</dbReference>
<dbReference type="UCSC" id="uc003udt.2">
    <property type="organism name" value="human"/>
</dbReference>
<dbReference type="AGR" id="HGNC:10625"/>
<dbReference type="CTD" id="10344"/>
<dbReference type="DisGeNET" id="10344"/>
<dbReference type="GeneCards" id="CCL26"/>
<dbReference type="HGNC" id="HGNC:10625">
    <property type="gene designation" value="CCL26"/>
</dbReference>
<dbReference type="HPA" id="ENSG00000006606">
    <property type="expression patterns" value="Tissue enhanced (choroid plexus, ovary)"/>
</dbReference>
<dbReference type="MIM" id="604697">
    <property type="type" value="gene"/>
</dbReference>
<dbReference type="neXtProt" id="NX_Q9Y258"/>
<dbReference type="OpenTargets" id="ENSG00000006606"/>
<dbReference type="PharmGKB" id="PA35557"/>
<dbReference type="VEuPathDB" id="HostDB:ENSG00000006606"/>
<dbReference type="eggNOG" id="ENOG502T082">
    <property type="taxonomic scope" value="Eukaryota"/>
</dbReference>
<dbReference type="GeneTree" id="ENSGT01100000263482"/>
<dbReference type="HOGENOM" id="CLU_141716_6_0_1"/>
<dbReference type="InParanoid" id="Q9Y258"/>
<dbReference type="OMA" id="ILPWKWV"/>
<dbReference type="OrthoDB" id="8934837at2759"/>
<dbReference type="PAN-GO" id="Q9Y258">
    <property type="GO annotations" value="15 GO annotations based on evolutionary models"/>
</dbReference>
<dbReference type="PhylomeDB" id="Q9Y258"/>
<dbReference type="TreeFam" id="TF334888"/>
<dbReference type="PathwayCommons" id="Q9Y258"/>
<dbReference type="SignaLink" id="Q9Y258"/>
<dbReference type="BioGRID-ORCS" id="10344">
    <property type="hits" value="18 hits in 1149 CRISPR screens"/>
</dbReference>
<dbReference type="EvolutionaryTrace" id="Q9Y258"/>
<dbReference type="GenomeRNAi" id="10344"/>
<dbReference type="Pharos" id="Q9Y258">
    <property type="development level" value="Tbio"/>
</dbReference>
<dbReference type="PRO" id="PR:Q9Y258"/>
<dbReference type="Proteomes" id="UP000005640">
    <property type="component" value="Chromosome 7"/>
</dbReference>
<dbReference type="RNAct" id="Q9Y258">
    <property type="molecule type" value="protein"/>
</dbReference>
<dbReference type="Bgee" id="ENSG00000006606">
    <property type="expression patterns" value="Expressed in male germ line stem cell (sensu Vertebrata) in testis and 96 other cell types or tissues"/>
</dbReference>
<dbReference type="GO" id="GO:0005615">
    <property type="term" value="C:extracellular space"/>
    <property type="evidence" value="ECO:0000314"/>
    <property type="project" value="CAFA"/>
</dbReference>
<dbReference type="GO" id="GO:0048020">
    <property type="term" value="F:CCR chemokine receptor binding"/>
    <property type="evidence" value="ECO:0000318"/>
    <property type="project" value="GO_Central"/>
</dbReference>
<dbReference type="GO" id="GO:0031728">
    <property type="term" value="F:CCR3 chemokine receptor binding"/>
    <property type="evidence" value="ECO:0000314"/>
    <property type="project" value="CAFA"/>
</dbReference>
<dbReference type="GO" id="GO:0008009">
    <property type="term" value="F:chemokine activity"/>
    <property type="evidence" value="ECO:0000314"/>
    <property type="project" value="CAFA"/>
</dbReference>
<dbReference type="GO" id="GO:0031737">
    <property type="term" value="F:CX3C chemokine receptor binding"/>
    <property type="evidence" value="ECO:0000314"/>
    <property type="project" value="UniProtKB"/>
</dbReference>
<dbReference type="GO" id="GO:0048018">
    <property type="term" value="F:receptor ligand activity"/>
    <property type="evidence" value="ECO:0000314"/>
    <property type="project" value="CAFA"/>
</dbReference>
<dbReference type="GO" id="GO:0061844">
    <property type="term" value="P:antimicrobial humoral immune response mediated by antimicrobial peptide"/>
    <property type="evidence" value="ECO:0000318"/>
    <property type="project" value="GO_Central"/>
</dbReference>
<dbReference type="GO" id="GO:0007267">
    <property type="term" value="P:cell-cell signaling"/>
    <property type="evidence" value="ECO:0000304"/>
    <property type="project" value="ProtInc"/>
</dbReference>
<dbReference type="GO" id="GO:0070098">
    <property type="term" value="P:chemokine-mediated signaling pathway"/>
    <property type="evidence" value="ECO:0000314"/>
    <property type="project" value="CAFA"/>
</dbReference>
<dbReference type="GO" id="GO:0006935">
    <property type="term" value="P:chemotaxis"/>
    <property type="evidence" value="ECO:0000304"/>
    <property type="project" value="ProtInc"/>
</dbReference>
<dbReference type="GO" id="GO:0048245">
    <property type="term" value="P:eosinophil chemotaxis"/>
    <property type="evidence" value="ECO:0000318"/>
    <property type="project" value="GO_Central"/>
</dbReference>
<dbReference type="GO" id="GO:0006954">
    <property type="term" value="P:inflammatory response"/>
    <property type="evidence" value="ECO:0000318"/>
    <property type="project" value="GO_Central"/>
</dbReference>
<dbReference type="GO" id="GO:0002548">
    <property type="term" value="P:monocyte chemotaxis"/>
    <property type="evidence" value="ECO:0000314"/>
    <property type="project" value="CAFA"/>
</dbReference>
<dbReference type="GO" id="GO:0030838">
    <property type="term" value="P:positive regulation of actin filament polymerization"/>
    <property type="evidence" value="ECO:0000314"/>
    <property type="project" value="BHF-UCL"/>
</dbReference>
<dbReference type="GO" id="GO:0030335">
    <property type="term" value="P:positive regulation of cell migration"/>
    <property type="evidence" value="ECO:0000314"/>
    <property type="project" value="BHF-UCL"/>
</dbReference>
<dbReference type="GO" id="GO:0050921">
    <property type="term" value="P:positive regulation of chemotaxis"/>
    <property type="evidence" value="ECO:0000314"/>
    <property type="project" value="CAFA"/>
</dbReference>
<dbReference type="GO" id="GO:0001938">
    <property type="term" value="P:positive regulation of endothelial cell proliferation"/>
    <property type="evidence" value="ECO:0000314"/>
    <property type="project" value="BHF-UCL"/>
</dbReference>
<dbReference type="GO" id="GO:0007165">
    <property type="term" value="P:signal transduction"/>
    <property type="evidence" value="ECO:0000303"/>
    <property type="project" value="ProtInc"/>
</dbReference>
<dbReference type="GO" id="GO:0010818">
    <property type="term" value="P:T cell chemotaxis"/>
    <property type="evidence" value="ECO:0000314"/>
    <property type="project" value="CAFA"/>
</dbReference>
<dbReference type="CDD" id="cd00272">
    <property type="entry name" value="Chemokine_CC"/>
    <property type="match status" value="1"/>
</dbReference>
<dbReference type="DisProt" id="DP00696"/>
<dbReference type="FunFam" id="2.40.50.40:FF:000002">
    <property type="entry name" value="C-C motif chemokine"/>
    <property type="match status" value="1"/>
</dbReference>
<dbReference type="Gene3D" id="2.40.50.40">
    <property type="match status" value="1"/>
</dbReference>
<dbReference type="InterPro" id="IPR039809">
    <property type="entry name" value="Chemokine_b/g/d"/>
</dbReference>
<dbReference type="InterPro" id="IPR000827">
    <property type="entry name" value="Chemokine_CC_CS"/>
</dbReference>
<dbReference type="InterPro" id="IPR001811">
    <property type="entry name" value="Chemokine_IL8-like_dom"/>
</dbReference>
<dbReference type="InterPro" id="IPR036048">
    <property type="entry name" value="Interleukin_8-like_sf"/>
</dbReference>
<dbReference type="PANTHER" id="PTHR12015:SF73">
    <property type="entry name" value="C-C MOTIF CHEMOKINE 26"/>
    <property type="match status" value="1"/>
</dbReference>
<dbReference type="PANTHER" id="PTHR12015">
    <property type="entry name" value="SMALL INDUCIBLE CYTOKINE A"/>
    <property type="match status" value="1"/>
</dbReference>
<dbReference type="Pfam" id="PF00048">
    <property type="entry name" value="IL8"/>
    <property type="match status" value="1"/>
</dbReference>
<dbReference type="SMART" id="SM00199">
    <property type="entry name" value="SCY"/>
    <property type="match status" value="1"/>
</dbReference>
<dbReference type="SUPFAM" id="SSF54117">
    <property type="entry name" value="Interleukin 8-like chemokines"/>
    <property type="match status" value="1"/>
</dbReference>
<dbReference type="PROSITE" id="PS00472">
    <property type="entry name" value="SMALL_CYTOKINES_CC"/>
    <property type="match status" value="1"/>
</dbReference>
<reference key="1">
    <citation type="journal article" date="1999" name="Genomics">
        <title>Molecular cloning and characterization of a novel human CC chemokine, SCYA26.</title>
        <authorList>
            <person name="Guo R.F."/>
            <person name="Ward P.A."/>
            <person name="Hu S.M."/>
            <person name="McDuffie J.E."/>
            <person name="Huber-Lang M."/>
            <person name="Shi M.M."/>
        </authorList>
    </citation>
    <scope>NUCLEOTIDE SEQUENCE [MRNA]</scope>
    <scope>TISSUE SPECIFICITY</scope>
    <source>
        <tissue>Heart</tissue>
    </source>
</reference>
<reference key="2">
    <citation type="journal article" date="1999" name="J. Immunol.">
        <title>A novel human CC chemokine, eotaxin-3, which is expressed in IL-4-stimulated vascular endothelial cells, exhibits potent activity toward eosinophils.</title>
        <authorList>
            <person name="Shinkai A."/>
            <person name="Yoshisue H."/>
            <person name="Koike M."/>
            <person name="Shoji E."/>
            <person name="Nakagawa S."/>
            <person name="Saito A."/>
            <person name="Takeda T."/>
            <person name="Imabeppu S."/>
            <person name="Kato Y."/>
            <person name="Hanai N."/>
            <person name="Anazawa H."/>
            <person name="Kuga T."/>
            <person name="Nishi T."/>
        </authorList>
    </citation>
    <scope>NUCLEOTIDE SEQUENCE [MRNA]</scope>
    <scope>FUNCTION</scope>
    <source>
        <tissue>Heart</tissue>
    </source>
</reference>
<reference key="3">
    <citation type="journal article" date="1999" name="J. Biol. Chem.">
        <title>Molecular cloning of a novel human CC chemokine (Eotaxin-3) that is a functional ligand of CC chemokine receptor 3.</title>
        <authorList>
            <person name="Kitaura M."/>
            <person name="Suzuki N."/>
            <person name="Imai T."/>
            <person name="Takagi S."/>
            <person name="Suzuki R."/>
            <person name="Nakajima T."/>
            <person name="Hirai K."/>
            <person name="Nomiyama H."/>
            <person name="Yoshie O."/>
        </authorList>
    </citation>
    <scope>NUCLEOTIDE SEQUENCE [MRNA]</scope>
    <scope>PROTEIN SEQUENCE OF N-TERMINUS</scope>
    <scope>FUNCTION</scope>
    <scope>SUBUNIT</scope>
    <scope>SUBCELLULAR LOCATION</scope>
    <scope>TISSUE SPECIFICITY</scope>
    <source>
        <tissue>Lung</tissue>
    </source>
</reference>
<reference key="4">
    <citation type="submission" date="1998-10" db="EMBL/GenBank/DDBJ databases">
        <title>A novel CC chemokine expressed in thymic stroma.</title>
        <authorList>
            <person name="Wang Z."/>
            <person name="Scadden D.T."/>
        </authorList>
    </citation>
    <scope>NUCLEOTIDE SEQUENCE [MRNA]</scope>
</reference>
<reference key="5">
    <citation type="submission" date="1999-04" db="EMBL/GenBank/DDBJ databases">
        <title>Molecular cloning and characterization of a new human CC chemokine IMAC.</title>
        <authorList>
            <person name="Berg E.L."/>
            <person name="Melrose J."/>
            <person name="Fu H."/>
            <person name="Tsurushita N."/>
        </authorList>
    </citation>
    <scope>NUCLEOTIDE SEQUENCE [MRNA]</scope>
</reference>
<reference key="6">
    <citation type="submission" date="2006-10" db="EMBL/GenBank/DDBJ databases">
        <authorList>
            <person name="Livingston R.J."/>
            <person name="Shaffer T."/>
            <person name="McFarland I."/>
            <person name="Nguyen C.P."/>
            <person name="Stanaway I.B."/>
            <person name="Rajkumar N."/>
            <person name="Johnson E.J."/>
            <person name="da Ponte S.H."/>
            <person name="Willa H."/>
            <person name="Ahearn M.O."/>
            <person name="Bertucci C."/>
            <person name="Acklestad J."/>
            <person name="Carroll A."/>
            <person name="Swanson J."/>
            <person name="Gildersleeve H.I."/>
            <person name="Nickerson D.A."/>
        </authorList>
    </citation>
    <scope>NUCLEOTIDE SEQUENCE [GENOMIC DNA]</scope>
</reference>
<reference key="7">
    <citation type="journal article" date="2003" name="Genome Res.">
        <title>The secreted protein discovery initiative (SPDI), a large-scale effort to identify novel human secreted and transmembrane proteins: a bioinformatics assessment.</title>
        <authorList>
            <person name="Clark H.F."/>
            <person name="Gurney A.L."/>
            <person name="Abaya E."/>
            <person name="Baker K."/>
            <person name="Baldwin D.T."/>
            <person name="Brush J."/>
            <person name="Chen J."/>
            <person name="Chow B."/>
            <person name="Chui C."/>
            <person name="Crowley C."/>
            <person name="Currell B."/>
            <person name="Deuel B."/>
            <person name="Dowd P."/>
            <person name="Eaton D."/>
            <person name="Foster J.S."/>
            <person name="Grimaldi C."/>
            <person name="Gu Q."/>
            <person name="Hass P.E."/>
            <person name="Heldens S."/>
            <person name="Huang A."/>
            <person name="Kim H.S."/>
            <person name="Klimowski L."/>
            <person name="Jin Y."/>
            <person name="Johnson S."/>
            <person name="Lee J."/>
            <person name="Lewis L."/>
            <person name="Liao D."/>
            <person name="Mark M.R."/>
            <person name="Robbie E."/>
            <person name="Sanchez C."/>
            <person name="Schoenfeld J."/>
            <person name="Seshagiri S."/>
            <person name="Simmons L."/>
            <person name="Singh J."/>
            <person name="Smith V."/>
            <person name="Stinson J."/>
            <person name="Vagts A."/>
            <person name="Vandlen R.L."/>
            <person name="Watanabe C."/>
            <person name="Wieand D."/>
            <person name="Woods K."/>
            <person name="Xie M.-H."/>
            <person name="Yansura D.G."/>
            <person name="Yi S."/>
            <person name="Yu G."/>
            <person name="Yuan J."/>
            <person name="Zhang M."/>
            <person name="Zhang Z."/>
            <person name="Goddard A.D."/>
            <person name="Wood W.I."/>
            <person name="Godowski P.J."/>
            <person name="Gray A.M."/>
        </authorList>
    </citation>
    <scope>NUCLEOTIDE SEQUENCE [LARGE SCALE MRNA]</scope>
</reference>
<reference key="8">
    <citation type="journal article" date="2003" name="Nature">
        <title>The DNA sequence of human chromosome 7.</title>
        <authorList>
            <person name="Hillier L.W."/>
            <person name="Fulton R.S."/>
            <person name="Fulton L.A."/>
            <person name="Graves T.A."/>
            <person name="Pepin K.H."/>
            <person name="Wagner-McPherson C."/>
            <person name="Layman D."/>
            <person name="Maas J."/>
            <person name="Jaeger S."/>
            <person name="Walker R."/>
            <person name="Wylie K."/>
            <person name="Sekhon M."/>
            <person name="Becker M.C."/>
            <person name="O'Laughlin M.D."/>
            <person name="Schaller M.E."/>
            <person name="Fewell G.A."/>
            <person name="Delehaunty K.D."/>
            <person name="Miner T.L."/>
            <person name="Nash W.E."/>
            <person name="Cordes M."/>
            <person name="Du H."/>
            <person name="Sun H."/>
            <person name="Edwards J."/>
            <person name="Bradshaw-Cordum H."/>
            <person name="Ali J."/>
            <person name="Andrews S."/>
            <person name="Isak A."/>
            <person name="Vanbrunt A."/>
            <person name="Nguyen C."/>
            <person name="Du F."/>
            <person name="Lamar B."/>
            <person name="Courtney L."/>
            <person name="Kalicki J."/>
            <person name="Ozersky P."/>
            <person name="Bielicki L."/>
            <person name="Scott K."/>
            <person name="Holmes A."/>
            <person name="Harkins R."/>
            <person name="Harris A."/>
            <person name="Strong C.M."/>
            <person name="Hou S."/>
            <person name="Tomlinson C."/>
            <person name="Dauphin-Kohlberg S."/>
            <person name="Kozlowicz-Reilly A."/>
            <person name="Leonard S."/>
            <person name="Rohlfing T."/>
            <person name="Rock S.M."/>
            <person name="Tin-Wollam A.-M."/>
            <person name="Abbott A."/>
            <person name="Minx P."/>
            <person name="Maupin R."/>
            <person name="Strowmatt C."/>
            <person name="Latreille P."/>
            <person name="Miller N."/>
            <person name="Johnson D."/>
            <person name="Murray J."/>
            <person name="Woessner J.P."/>
            <person name="Wendl M.C."/>
            <person name="Yang S.-P."/>
            <person name="Schultz B.R."/>
            <person name="Wallis J.W."/>
            <person name="Spieth J."/>
            <person name="Bieri T.A."/>
            <person name="Nelson J.O."/>
            <person name="Berkowicz N."/>
            <person name="Wohldmann P.E."/>
            <person name="Cook L.L."/>
            <person name="Hickenbotham M.T."/>
            <person name="Eldred J."/>
            <person name="Williams D."/>
            <person name="Bedell J.A."/>
            <person name="Mardis E.R."/>
            <person name="Clifton S.W."/>
            <person name="Chissoe S.L."/>
            <person name="Marra M.A."/>
            <person name="Raymond C."/>
            <person name="Haugen E."/>
            <person name="Gillett W."/>
            <person name="Zhou Y."/>
            <person name="James R."/>
            <person name="Phelps K."/>
            <person name="Iadanoto S."/>
            <person name="Bubb K."/>
            <person name="Simms E."/>
            <person name="Levy R."/>
            <person name="Clendenning J."/>
            <person name="Kaul R."/>
            <person name="Kent W.J."/>
            <person name="Furey T.S."/>
            <person name="Baertsch R.A."/>
            <person name="Brent M.R."/>
            <person name="Keibler E."/>
            <person name="Flicek P."/>
            <person name="Bork P."/>
            <person name="Suyama M."/>
            <person name="Bailey J.A."/>
            <person name="Portnoy M.E."/>
            <person name="Torrents D."/>
            <person name="Chinwalla A.T."/>
            <person name="Gish W.R."/>
            <person name="Eddy S.R."/>
            <person name="McPherson J.D."/>
            <person name="Olson M.V."/>
            <person name="Eichler E.E."/>
            <person name="Green E.D."/>
            <person name="Waterston R.H."/>
            <person name="Wilson R.K."/>
        </authorList>
    </citation>
    <scope>NUCLEOTIDE SEQUENCE [LARGE SCALE GENOMIC DNA]</scope>
</reference>
<reference key="9">
    <citation type="submission" date="2005-07" db="EMBL/GenBank/DDBJ databases">
        <authorList>
            <person name="Mural R.J."/>
            <person name="Istrail S."/>
            <person name="Sutton G.G."/>
            <person name="Florea L."/>
            <person name="Halpern A.L."/>
            <person name="Mobarry C.M."/>
            <person name="Lippert R."/>
            <person name="Walenz B."/>
            <person name="Shatkay H."/>
            <person name="Dew I."/>
            <person name="Miller J.R."/>
            <person name="Flanigan M.J."/>
            <person name="Edwards N.J."/>
            <person name="Bolanos R."/>
            <person name="Fasulo D."/>
            <person name="Halldorsson B.V."/>
            <person name="Hannenhalli S."/>
            <person name="Turner R."/>
            <person name="Yooseph S."/>
            <person name="Lu F."/>
            <person name="Nusskern D.R."/>
            <person name="Shue B.C."/>
            <person name="Zheng X.H."/>
            <person name="Zhong F."/>
            <person name="Delcher A.L."/>
            <person name="Huson D.H."/>
            <person name="Kravitz S.A."/>
            <person name="Mouchard L."/>
            <person name="Reinert K."/>
            <person name="Remington K.A."/>
            <person name="Clark A.G."/>
            <person name="Waterman M.S."/>
            <person name="Eichler E.E."/>
            <person name="Adams M.D."/>
            <person name="Hunkapiller M.W."/>
            <person name="Myers E.W."/>
            <person name="Venter J.C."/>
        </authorList>
    </citation>
    <scope>NUCLEOTIDE SEQUENCE [LARGE SCALE GENOMIC DNA]</scope>
</reference>
<reference key="10">
    <citation type="journal article" date="2004" name="Genome Res.">
        <title>The status, quality, and expansion of the NIH full-length cDNA project: the Mammalian Gene Collection (MGC).</title>
        <authorList>
            <consortium name="The MGC Project Team"/>
        </authorList>
    </citation>
    <scope>NUCLEOTIDE SEQUENCE [LARGE SCALE MRNA]</scope>
    <source>
        <tissue>Colon</tissue>
    </source>
</reference>
<reference key="11">
    <citation type="journal article" date="2001" name="Biochemistry">
        <title>NMR solution structure and backbone dynamics of the CC chemokine eotaxin-3.</title>
        <authorList>
            <person name="Ye J."/>
            <person name="Mayer K.L."/>
            <person name="Mayer M.R."/>
            <person name="Stone M.J."/>
        </authorList>
    </citation>
    <scope>STRUCTURE BY NMR</scope>
    <scope>FUNCTION</scope>
    <scope>DISULFIDE BONDS</scope>
</reference>
<reference key="12">
    <citation type="journal article" date="2010" name="J. Immunol.">
        <title>Eotaxin-3/CC chemokine ligand 26 is a functional ligand for CX3CR1.</title>
        <authorList>
            <person name="Nakayama T."/>
            <person name="Watanabe Y."/>
            <person name="Oiso N."/>
            <person name="Higuchi T."/>
            <person name="Shigeta A."/>
            <person name="Mizuguchi N."/>
            <person name="Katou F."/>
            <person name="Hashimoto K."/>
            <person name="Kawada A."/>
            <person name="Yoshie O."/>
        </authorList>
    </citation>
    <scope>FUNCTION</scope>
</reference>
<gene>
    <name evidence="12" type="primary">CCL26</name>
    <name evidence="6" type="synonym">SCYA26</name>
    <name evidence="8" type="ORF">UNQ216/PRO242</name>
</gene>
<accession>Q9Y258</accession>
<accession>A0N0Q5</accession>
<accession>Q52LV8</accession>
<evidence type="ECO:0000269" key="1">
    <source>
    </source>
</evidence>
<evidence type="ECO:0000269" key="2">
    <source>
    </source>
</evidence>
<evidence type="ECO:0000269" key="3">
    <source>
    </source>
</evidence>
<evidence type="ECO:0000269" key="4">
    <source>
    </source>
</evidence>
<evidence type="ECO:0000269" key="5">
    <source>
    </source>
</evidence>
<evidence type="ECO:0000303" key="6">
    <source>
    </source>
</evidence>
<evidence type="ECO:0000303" key="7">
    <source>
    </source>
</evidence>
<evidence type="ECO:0000303" key="8">
    <source>
    </source>
</evidence>
<evidence type="ECO:0000303" key="9">
    <source ref="4"/>
</evidence>
<evidence type="ECO:0000303" key="10">
    <source ref="5"/>
</evidence>
<evidence type="ECO:0000305" key="11"/>
<evidence type="ECO:0000312" key="12">
    <source>
        <dbReference type="HGNC" id="HGNC:10625"/>
    </source>
</evidence>
<evidence type="ECO:0007829" key="13">
    <source>
        <dbReference type="PDB" id="1G2S"/>
    </source>
</evidence>
<protein>
    <recommendedName>
        <fullName>C-C motif chemokine 26</fullName>
    </recommendedName>
    <alternativeName>
        <fullName evidence="10">CC chemokine IMAC</fullName>
    </alternativeName>
    <alternativeName>
        <fullName evidence="7">Eotaxin-3</fullName>
    </alternativeName>
    <alternativeName>
        <fullName>Macrophage inflammatory protein 4-alpha</fullName>
        <shortName>MIP-4-alpha</shortName>
    </alternativeName>
    <alternativeName>
        <fullName evidence="6">Small-inducible cytokine A26</fullName>
    </alternativeName>
    <alternativeName>
        <fullName evidence="9">Thymic stroma chemokine-1</fullName>
        <shortName evidence="9">TSC-1</shortName>
    </alternativeName>
</protein>
<comment type="function">
    <text evidence="2 3 4 5">Chemoattractant for eosinophils and basophils (PubMed:10415065, PubMed:10488147). Acts as a ligand for C-C chemokine receptor CCR3 which triggers Ca(2+) mobilization in eosinophils (PubMed:10415065, PubMed:10488147, PubMed:11425309). Also acts as a ligand for CX3C chemokine receptor CX3CR1, inducing cell chemotaxis (PubMed:20974991).</text>
</comment>
<comment type="subunit">
    <text evidence="3">Monomer.</text>
</comment>
<comment type="interaction">
    <interactant intactId="EBI-7783416">
        <id>Q9Y258</id>
    </interactant>
    <interactant intactId="EBI-725342">
        <id>Q99616</id>
        <label>CCL13</label>
    </interactant>
    <organismsDiffer>false</organismsDiffer>
    <experiments>2</experiments>
</comment>
<comment type="interaction">
    <interactant intactId="EBI-7783416">
        <id>Q9Y258</id>
    </interactant>
    <interactant intactId="EBI-16640146">
        <id>Q92583</id>
        <label>CCL17</label>
    </interactant>
    <organismsDiffer>false</organismsDiffer>
    <experiments>2</experiments>
</comment>
<comment type="interaction">
    <interactant intactId="EBI-7783416">
        <id>Q9Y258</id>
    </interactant>
    <interactant intactId="EBI-953695">
        <id>O00585</id>
        <label>CCL21</label>
    </interactant>
    <organismsDiffer>false</organismsDiffer>
    <experiments>2</experiments>
</comment>
<comment type="interaction">
    <interactant intactId="EBI-7783416">
        <id>Q9Y258</id>
    </interactant>
    <interactant intactId="EBI-7783254">
        <id>Q9NRJ3</id>
        <label>CCL28</label>
    </interactant>
    <organismsDiffer>false</organismsDiffer>
    <experiments>2</experiments>
</comment>
<comment type="interaction">
    <interactant intactId="EBI-7783416">
        <id>Q9Y258</id>
    </interactant>
    <interactant intactId="EBI-2848366">
        <id>P13501</id>
        <label>CCL5</label>
    </interactant>
    <organismsDiffer>false</organismsDiffer>
    <experiments>4</experiments>
</comment>
<comment type="interaction">
    <interactant intactId="EBI-7783416">
        <id>Q9Y258</id>
    </interactant>
    <interactant intactId="EBI-7815386">
        <id>P02778</id>
        <label>CXCL10</label>
    </interactant>
    <organismsDiffer>false</organismsDiffer>
    <experiments>2</experiments>
</comment>
<comment type="interaction">
    <interactant intactId="EBI-7783416">
        <id>Q9Y258</id>
    </interactant>
    <interactant intactId="EBI-2871971">
        <id>O14625</id>
        <label>CXCL11</label>
    </interactant>
    <organismsDiffer>false</organismsDiffer>
    <experiments>2</experiments>
</comment>
<comment type="interaction">
    <interactant intactId="EBI-7783416">
        <id>Q9Y258</id>
    </interactant>
    <interactant intactId="EBI-3913254">
        <id>P48061</id>
        <label>CXCL12</label>
    </interactant>
    <organismsDiffer>false</organismsDiffer>
    <experiments>2</experiments>
</comment>
<comment type="interaction">
    <interactant intactId="EBI-7783416">
        <id>Q9Y258</id>
    </interactant>
    <interactant intactId="EBI-2798068">
        <id>O95715</id>
        <label>CXCL14</label>
    </interactant>
    <organismsDiffer>false</organismsDiffer>
    <experiments>2</experiments>
</comment>
<comment type="interaction">
    <interactant intactId="EBI-7783416">
        <id>Q9Y258</id>
    </interactant>
    <interactant intactId="EBI-3911467">
        <id>Q07325</id>
        <label>CXCL9</label>
    </interactant>
    <organismsDiffer>false</organismsDiffer>
    <experiments>2</experiments>
</comment>
<comment type="interaction">
    <interactant intactId="EBI-7783416">
        <id>Q9Y258</id>
    </interactant>
    <interactant intactId="EBI-747278">
        <id>P26367</id>
        <label>PAX6</label>
    </interactant>
    <organismsDiffer>false</organismsDiffer>
    <experiments>3</experiments>
</comment>
<comment type="interaction">
    <interactant intactId="EBI-7783416">
        <id>Q9Y258</id>
    </interactant>
    <interactant intactId="EBI-2565740">
        <id>P02776</id>
        <label>PF4</label>
    </interactant>
    <organismsDiffer>false</organismsDiffer>
    <experiments>3</experiments>
</comment>
<comment type="interaction">
    <interactant intactId="EBI-7783416">
        <id>Q9Y258</id>
    </interactant>
    <interactant intactId="EBI-10243654">
        <id>Q5BVD1</id>
        <label>TTMP</label>
    </interactant>
    <organismsDiffer>false</organismsDiffer>
    <experiments>3</experiments>
</comment>
<comment type="interaction">
    <interactant intactId="EBI-7783416">
        <id>Q9Y258</id>
    </interactant>
    <interactant intactId="EBI-10209901">
        <id>P47992</id>
        <label>XCL1</label>
    </interactant>
    <organismsDiffer>false</organismsDiffer>
    <experiments>2</experiments>
</comment>
<comment type="subcellular location">
    <subcellularLocation>
        <location evidence="3">Secreted</location>
    </subcellularLocation>
</comment>
<comment type="tissue specificity">
    <text evidence="1 3">Ubiquitously expressed at low levels in various tissues including heart and ovary.</text>
</comment>
<comment type="similarity">
    <text evidence="11">Belongs to the intercrine beta (chemokine CC) family.</text>
</comment>
<comment type="online information" name="Wikipedia">
    <link uri="https://en.wikipedia.org/wiki/CCL26"/>
    <text>CCL26 entry</text>
</comment>
<name>CCL26_HUMAN</name>
<proteinExistence type="evidence at protein level"/>